<comment type="function">
    <text evidence="1">Guanylyltransferase that catalyzes the activation of phosphoenolpyruvate (PEP) as enolpyruvoyl-2-diphospho-5'-guanosine, via the condensation of PEP with GTP. It is involved in the biosynthesis of coenzyme F420, a hydride carrier cofactor.</text>
</comment>
<comment type="catalytic activity">
    <reaction evidence="1">
        <text>phosphoenolpyruvate + GTP + H(+) = enolpyruvoyl-2-diphospho-5'-guanosine + diphosphate</text>
        <dbReference type="Rhea" id="RHEA:30519"/>
        <dbReference type="ChEBI" id="CHEBI:15378"/>
        <dbReference type="ChEBI" id="CHEBI:33019"/>
        <dbReference type="ChEBI" id="CHEBI:37565"/>
        <dbReference type="ChEBI" id="CHEBI:58702"/>
        <dbReference type="ChEBI" id="CHEBI:143701"/>
        <dbReference type="EC" id="2.7.7.105"/>
    </reaction>
</comment>
<comment type="pathway">
    <text evidence="1">Cofactor biosynthesis; coenzyme F420 biosynthesis.</text>
</comment>
<comment type="similarity">
    <text evidence="1">Belongs to the CofC family.</text>
</comment>
<reference key="1">
    <citation type="submission" date="2009-03" db="EMBL/GenBank/DDBJ databases">
        <title>Comparison of the complete genome sequences of Rhodococcus erythropolis PR4 and Rhodococcus opacus B4.</title>
        <authorList>
            <person name="Takarada H."/>
            <person name="Sekine M."/>
            <person name="Hosoyama A."/>
            <person name="Yamada R."/>
            <person name="Fujisawa T."/>
            <person name="Omata S."/>
            <person name="Shimizu A."/>
            <person name="Tsukatani N."/>
            <person name="Tanikawa S."/>
            <person name="Fujita N."/>
            <person name="Harayama S."/>
        </authorList>
    </citation>
    <scope>NUCLEOTIDE SEQUENCE [LARGE SCALE GENOMIC DNA]</scope>
    <source>
        <strain>B4</strain>
    </source>
</reference>
<evidence type="ECO:0000255" key="1">
    <source>
        <dbReference type="HAMAP-Rule" id="MF_02114"/>
    </source>
</evidence>
<keyword id="KW-0342">GTP-binding</keyword>
<keyword id="KW-0547">Nucleotide-binding</keyword>
<keyword id="KW-0548">Nucleotidyltransferase</keyword>
<keyword id="KW-0808">Transferase</keyword>
<gene>
    <name evidence="1" type="primary">fbiD</name>
    <name type="ordered locus">ROP_65550</name>
</gene>
<organism>
    <name type="scientific">Rhodococcus opacus (strain B4)</name>
    <dbReference type="NCBI Taxonomy" id="632772"/>
    <lineage>
        <taxon>Bacteria</taxon>
        <taxon>Bacillati</taxon>
        <taxon>Actinomycetota</taxon>
        <taxon>Actinomycetes</taxon>
        <taxon>Mycobacteriales</taxon>
        <taxon>Nocardiaceae</taxon>
        <taxon>Rhodococcus</taxon>
    </lineage>
</organism>
<name>FBID_RHOOB</name>
<dbReference type="EC" id="2.7.7.105" evidence="1"/>
<dbReference type="EMBL" id="AP011115">
    <property type="protein sequence ID" value="BAH54802.1"/>
    <property type="molecule type" value="Genomic_DNA"/>
</dbReference>
<dbReference type="SMR" id="C1B2N5"/>
<dbReference type="STRING" id="632772.ROP_65550"/>
<dbReference type="KEGG" id="rop:ROP_65550"/>
<dbReference type="PATRIC" id="fig|632772.20.peg.6841"/>
<dbReference type="HOGENOM" id="CLU_076569_0_0_11"/>
<dbReference type="OrthoDB" id="9151145at2"/>
<dbReference type="UniPathway" id="UPA00071"/>
<dbReference type="Proteomes" id="UP000002212">
    <property type="component" value="Chromosome"/>
</dbReference>
<dbReference type="GO" id="GO:0005525">
    <property type="term" value="F:GTP binding"/>
    <property type="evidence" value="ECO:0007669"/>
    <property type="project" value="UniProtKB-KW"/>
</dbReference>
<dbReference type="GO" id="GO:0043814">
    <property type="term" value="F:phospholactate guanylyltransferase activity"/>
    <property type="evidence" value="ECO:0007669"/>
    <property type="project" value="InterPro"/>
</dbReference>
<dbReference type="GO" id="GO:0052645">
    <property type="term" value="P:F420-0 metabolic process"/>
    <property type="evidence" value="ECO:0007669"/>
    <property type="project" value="UniProtKB-UniRule"/>
</dbReference>
<dbReference type="Gene3D" id="3.90.550.10">
    <property type="entry name" value="Spore Coat Polysaccharide Biosynthesis Protein SpsA, Chain A"/>
    <property type="match status" value="1"/>
</dbReference>
<dbReference type="HAMAP" id="MF_02114">
    <property type="entry name" value="CofC"/>
    <property type="match status" value="1"/>
</dbReference>
<dbReference type="InterPro" id="IPR002835">
    <property type="entry name" value="CofC"/>
</dbReference>
<dbReference type="InterPro" id="IPR029044">
    <property type="entry name" value="Nucleotide-diphossugar_trans"/>
</dbReference>
<dbReference type="NCBIfam" id="TIGR03552">
    <property type="entry name" value="F420_cofC"/>
    <property type="match status" value="1"/>
</dbReference>
<dbReference type="PANTHER" id="PTHR40392">
    <property type="entry name" value="2-PHOSPHO-L-LACTATE GUANYLYLTRANSFERASE"/>
    <property type="match status" value="1"/>
</dbReference>
<dbReference type="PANTHER" id="PTHR40392:SF1">
    <property type="entry name" value="2-PHOSPHO-L-LACTATE GUANYLYLTRANSFERASE"/>
    <property type="match status" value="1"/>
</dbReference>
<dbReference type="Pfam" id="PF01983">
    <property type="entry name" value="CofC"/>
    <property type="match status" value="1"/>
</dbReference>
<dbReference type="SUPFAM" id="SSF53448">
    <property type="entry name" value="Nucleotide-diphospho-sugar transferases"/>
    <property type="match status" value="1"/>
</dbReference>
<proteinExistence type="inferred from homology"/>
<sequence length="240" mass="24435">MSTATRSVAPRAHVLVAVKELHAAKTRLSGVFDTDDRTGLVLSMLRDTLAVVSDVATVVGVTVVTPDPAVARLARSVGAHVYADPAPVAAGDPADEGGTEHGLNAALAAAAEHVRRNESGVDVVALQADLPSLRGGEFGEALAAARTGGRSVVVDHHGTGTAALFSCDPEVPLDPRFGPGSAKRHLESGARPLDGHWPGLRTDVDTADDLDAAQALGVGPATRAALDALEHSAPSHCGNE</sequence>
<protein>
    <recommendedName>
        <fullName evidence="1">Phosphoenolpyruvate guanylyltransferase</fullName>
        <shortName evidence="1">PEP guanylyltransferase</shortName>
        <ecNumber evidence="1">2.7.7.105</ecNumber>
    </recommendedName>
</protein>
<accession>C1B2N5</accession>
<feature type="chain" id="PRO_0000398706" description="Phosphoenolpyruvate guanylyltransferase">
    <location>
        <begin position="1"/>
        <end position="240"/>
    </location>
</feature>
<feature type="binding site" evidence="1">
    <location>
        <position position="161"/>
    </location>
    <ligand>
        <name>phosphoenolpyruvate</name>
        <dbReference type="ChEBI" id="CHEBI:58702"/>
    </ligand>
</feature>
<feature type="binding site" evidence="1">
    <location>
        <position position="178"/>
    </location>
    <ligand>
        <name>phosphoenolpyruvate</name>
        <dbReference type="ChEBI" id="CHEBI:58702"/>
    </ligand>
</feature>
<feature type="binding site" evidence="1">
    <location>
        <position position="181"/>
    </location>
    <ligand>
        <name>phosphoenolpyruvate</name>
        <dbReference type="ChEBI" id="CHEBI:58702"/>
    </ligand>
</feature>